<organism>
    <name type="scientific">Erwinia tasmaniensis (strain DSM 17950 / CFBP 7177 / CIP 109463 / NCPPB 4357 / Et1/99)</name>
    <dbReference type="NCBI Taxonomy" id="465817"/>
    <lineage>
        <taxon>Bacteria</taxon>
        <taxon>Pseudomonadati</taxon>
        <taxon>Pseudomonadota</taxon>
        <taxon>Gammaproteobacteria</taxon>
        <taxon>Enterobacterales</taxon>
        <taxon>Erwiniaceae</taxon>
        <taxon>Erwinia</taxon>
    </lineage>
</organism>
<keyword id="KW-0436">Ligase</keyword>
<keyword id="KW-0597">Phosphoprotein</keyword>
<keyword id="KW-0662">Pyridine nucleotide biosynthesis</keyword>
<keyword id="KW-1185">Reference proteome</keyword>
<reference key="1">
    <citation type="journal article" date="2008" name="Environ. Microbiol.">
        <title>The genome of Erwinia tasmaniensis strain Et1/99, a non-pathogenic bacterium in the genus Erwinia.</title>
        <authorList>
            <person name="Kube M."/>
            <person name="Migdoll A.M."/>
            <person name="Mueller I."/>
            <person name="Kuhl H."/>
            <person name="Beck A."/>
            <person name="Reinhardt R."/>
            <person name="Geider K."/>
        </authorList>
    </citation>
    <scope>NUCLEOTIDE SEQUENCE [LARGE SCALE GENOMIC DNA]</scope>
    <source>
        <strain>DSM 17950 / CFBP 7177 / CIP 109463 / NCPPB 4357 / Et1/99</strain>
    </source>
</reference>
<accession>B2VC92</accession>
<evidence type="ECO:0000255" key="1">
    <source>
        <dbReference type="HAMAP-Rule" id="MF_00570"/>
    </source>
</evidence>
<proteinExistence type="inferred from homology"/>
<feature type="chain" id="PRO_1000129473" description="Nicotinate phosphoribosyltransferase">
    <location>
        <begin position="1"/>
        <end position="401"/>
    </location>
</feature>
<feature type="modified residue" description="Phosphohistidine; by autocatalysis" evidence="1">
    <location>
        <position position="221"/>
    </location>
</feature>
<dbReference type="EC" id="6.3.4.21" evidence="1"/>
<dbReference type="EMBL" id="CU468135">
    <property type="protein sequence ID" value="CAO97169.1"/>
    <property type="molecule type" value="Genomic_DNA"/>
</dbReference>
<dbReference type="RefSeq" id="WP_012441840.1">
    <property type="nucleotide sequence ID" value="NC_010694.1"/>
</dbReference>
<dbReference type="SMR" id="B2VC92"/>
<dbReference type="STRING" id="465817.ETA_21230"/>
<dbReference type="KEGG" id="eta:ETA_21230"/>
<dbReference type="eggNOG" id="COG1488">
    <property type="taxonomic scope" value="Bacteria"/>
</dbReference>
<dbReference type="HOGENOM" id="CLU_030991_1_0_6"/>
<dbReference type="OrthoDB" id="9771406at2"/>
<dbReference type="UniPathway" id="UPA00253">
    <property type="reaction ID" value="UER00457"/>
</dbReference>
<dbReference type="Proteomes" id="UP000001726">
    <property type="component" value="Chromosome"/>
</dbReference>
<dbReference type="GO" id="GO:0005829">
    <property type="term" value="C:cytosol"/>
    <property type="evidence" value="ECO:0007669"/>
    <property type="project" value="TreeGrafter"/>
</dbReference>
<dbReference type="GO" id="GO:0004516">
    <property type="term" value="F:nicotinate phosphoribosyltransferase activity"/>
    <property type="evidence" value="ECO:0007669"/>
    <property type="project" value="UniProtKB-UniRule"/>
</dbReference>
<dbReference type="GO" id="GO:0034355">
    <property type="term" value="P:NAD biosynthetic process via the salvage pathway"/>
    <property type="evidence" value="ECO:0007669"/>
    <property type="project" value="TreeGrafter"/>
</dbReference>
<dbReference type="CDD" id="cd01401">
    <property type="entry name" value="PncB_like"/>
    <property type="match status" value="1"/>
</dbReference>
<dbReference type="FunFam" id="3.20.140.10:FF:000001">
    <property type="entry name" value="Nicotinate phosphoribosyltransferase"/>
    <property type="match status" value="1"/>
</dbReference>
<dbReference type="Gene3D" id="3.20.140.10">
    <property type="entry name" value="nicotinate phosphoribosyltransferase"/>
    <property type="match status" value="1"/>
</dbReference>
<dbReference type="HAMAP" id="MF_00570">
    <property type="entry name" value="NAPRTase"/>
    <property type="match status" value="1"/>
</dbReference>
<dbReference type="InterPro" id="IPR041525">
    <property type="entry name" value="N/Namide_PRibTrfase"/>
</dbReference>
<dbReference type="InterPro" id="IPR040727">
    <property type="entry name" value="NAPRTase_N"/>
</dbReference>
<dbReference type="InterPro" id="IPR006406">
    <property type="entry name" value="Nic_PRibTrfase"/>
</dbReference>
<dbReference type="InterPro" id="IPR007229">
    <property type="entry name" value="Nic_PRibTrfase-Fam"/>
</dbReference>
<dbReference type="InterPro" id="IPR036068">
    <property type="entry name" value="Nicotinate_pribotase-like_C"/>
</dbReference>
<dbReference type="NCBIfam" id="TIGR01514">
    <property type="entry name" value="NAPRTase"/>
    <property type="match status" value="1"/>
</dbReference>
<dbReference type="NCBIfam" id="NF003704">
    <property type="entry name" value="PRK05321.1"/>
    <property type="match status" value="1"/>
</dbReference>
<dbReference type="PANTHER" id="PTHR11098">
    <property type="entry name" value="NICOTINATE PHOSPHORIBOSYLTRANSFERASE"/>
    <property type="match status" value="1"/>
</dbReference>
<dbReference type="PANTHER" id="PTHR11098:SF1">
    <property type="entry name" value="NICOTINATE PHOSPHORIBOSYLTRANSFERASE"/>
    <property type="match status" value="1"/>
</dbReference>
<dbReference type="Pfam" id="PF04095">
    <property type="entry name" value="NAPRTase"/>
    <property type="match status" value="1"/>
</dbReference>
<dbReference type="Pfam" id="PF17767">
    <property type="entry name" value="NAPRTase_N"/>
    <property type="match status" value="1"/>
</dbReference>
<dbReference type="PIRSF" id="PIRSF000484">
    <property type="entry name" value="NAPRT"/>
    <property type="match status" value="1"/>
</dbReference>
<dbReference type="SUPFAM" id="SSF51690">
    <property type="entry name" value="Nicotinate/Quinolinate PRTase C-terminal domain-like"/>
    <property type="match status" value="1"/>
</dbReference>
<dbReference type="SUPFAM" id="SSF54675">
    <property type="entry name" value="Nicotinate/Quinolinate PRTase N-terminal domain-like"/>
    <property type="match status" value="1"/>
</dbReference>
<sequence length="401" mass="46055">MTRHAAPILTTLLDTDAYKLHMQQAVFHRYYDVTVTAEFRCRGEDMLGIYADELVQQIANMASLTLTDNEFAYLSSLPFFKTDYLNWLRTFRYNPEQVTVQNLQGKLDIRISGPWREVILWEVPLLALISEVVHRHRSPQITPEQAVSRLKSKLEQFKRLTCDLDMSRFRLMDFGTRRRFSHDVQLAVVSTLKQDFPWLVGSSNYDIARRLNIAPVGTQAHEWFQAHQQISPTLENCQRAALQAWLDEYPDRLGIALTDCITTDAFLRDFGSEFAHAYQGLRHDSGDPFEWGEKAIAHYQQLNIDPLSKTLVFSDNLDLDKAVGLYRHFEQRINVIFGIGTRLSCDIPQVKPLNIVIKLVECNGKPVAKLSDSPGKTICHDKAFVRALRKAFDLPRVKKAS</sequence>
<gene>
    <name evidence="1" type="primary">pncB</name>
    <name type="ordered locus">ETA_21230</name>
</gene>
<name>PNCB_ERWT9</name>
<comment type="function">
    <text evidence="1">Catalyzes the synthesis of beta-nicotinate D-ribonucleotide from nicotinate and 5-phospho-D-ribose 1-phosphate at the expense of ATP.</text>
</comment>
<comment type="catalytic activity">
    <reaction evidence="1">
        <text>nicotinate + 5-phospho-alpha-D-ribose 1-diphosphate + ATP + H2O = nicotinate beta-D-ribonucleotide + ADP + phosphate + diphosphate</text>
        <dbReference type="Rhea" id="RHEA:36163"/>
        <dbReference type="ChEBI" id="CHEBI:15377"/>
        <dbReference type="ChEBI" id="CHEBI:30616"/>
        <dbReference type="ChEBI" id="CHEBI:32544"/>
        <dbReference type="ChEBI" id="CHEBI:33019"/>
        <dbReference type="ChEBI" id="CHEBI:43474"/>
        <dbReference type="ChEBI" id="CHEBI:57502"/>
        <dbReference type="ChEBI" id="CHEBI:58017"/>
        <dbReference type="ChEBI" id="CHEBI:456216"/>
        <dbReference type="EC" id="6.3.4.21"/>
    </reaction>
</comment>
<comment type="pathway">
    <text evidence="1">Cofactor biosynthesis; NAD(+) biosynthesis; nicotinate D-ribonucleotide from nicotinate: step 1/1.</text>
</comment>
<comment type="PTM">
    <text evidence="1">Transiently phosphorylated on a His residue during the reaction cycle. Phosphorylation strongly increases the affinity for substrates and increases the rate of nicotinate D-ribonucleotide production. Dephosphorylation regenerates the low-affinity form of the enzyme, leading to product release.</text>
</comment>
<comment type="similarity">
    <text evidence="1">Belongs to the NAPRTase family.</text>
</comment>
<protein>
    <recommendedName>
        <fullName evidence="1">Nicotinate phosphoribosyltransferase</fullName>
        <shortName evidence="1">NAPRTase</shortName>
        <ecNumber evidence="1">6.3.4.21</ecNumber>
    </recommendedName>
</protein>